<gene>
    <name type="ordered locus">TTE0610</name>
</gene>
<gene>
    <name type="ordered locus">TTE0881</name>
</gene>
<gene>
    <name type="ordered locus">TTE1053</name>
</gene>
<gene>
    <name type="ordered locus">TTE2432</name>
</gene>
<keyword id="KW-1185">Reference proteome</keyword>
<proteinExistence type="inferred from homology"/>
<name>Y610_CALS4</name>
<accession>Q8R6I2</accession>
<dbReference type="EMBL" id="AE008691">
    <property type="protein sequence ID" value="AAM23880.1"/>
    <property type="molecule type" value="Genomic_DNA"/>
</dbReference>
<dbReference type="EMBL" id="AE008691">
    <property type="protein sequence ID" value="AAM24137.1"/>
    <property type="molecule type" value="Genomic_DNA"/>
</dbReference>
<dbReference type="EMBL" id="AE008691">
    <property type="protein sequence ID" value="AAM24303.1"/>
    <property type="molecule type" value="Genomic_DNA"/>
</dbReference>
<dbReference type="EMBL" id="AE008691">
    <property type="protein sequence ID" value="AAM25568.1"/>
    <property type="molecule type" value="Genomic_DNA"/>
</dbReference>
<dbReference type="RefSeq" id="WP_011025025.1">
    <property type="nucleotide sequence ID" value="NC_003869.1"/>
</dbReference>
<dbReference type="SMR" id="Q8R6I2"/>
<dbReference type="STRING" id="273068.TTE0610"/>
<dbReference type="KEGG" id="tte:TTE0610"/>
<dbReference type="KEGG" id="tte:TTE0881"/>
<dbReference type="KEGG" id="tte:TTE1053"/>
<dbReference type="KEGG" id="tte:TTE2432"/>
<dbReference type="eggNOG" id="COG3464">
    <property type="taxonomic scope" value="Bacteria"/>
</dbReference>
<dbReference type="HOGENOM" id="CLU_040782_0_1_9"/>
<dbReference type="OrthoDB" id="1719576at2"/>
<dbReference type="Proteomes" id="UP000000555">
    <property type="component" value="Chromosome"/>
</dbReference>
<dbReference type="InterPro" id="IPR009620">
    <property type="entry name" value="UPF0236"/>
</dbReference>
<dbReference type="NCBIfam" id="NF033529">
    <property type="entry name" value="transpos_ISLre2"/>
    <property type="match status" value="1"/>
</dbReference>
<dbReference type="Pfam" id="PF06782">
    <property type="entry name" value="UPF0236"/>
    <property type="match status" value="1"/>
</dbReference>
<reference key="1">
    <citation type="journal article" date="2002" name="Genome Res.">
        <title>A complete sequence of the T. tengcongensis genome.</title>
        <authorList>
            <person name="Bao Q."/>
            <person name="Tian Y."/>
            <person name="Li W."/>
            <person name="Xu Z."/>
            <person name="Xuan Z."/>
            <person name="Hu S."/>
            <person name="Dong W."/>
            <person name="Yang J."/>
            <person name="Chen Y."/>
            <person name="Xue Y."/>
            <person name="Xu Y."/>
            <person name="Lai X."/>
            <person name="Huang L."/>
            <person name="Dong X."/>
            <person name="Ma Y."/>
            <person name="Ling L."/>
            <person name="Tan H."/>
            <person name="Chen R."/>
            <person name="Wang J."/>
            <person name="Yu J."/>
            <person name="Yang H."/>
        </authorList>
    </citation>
    <scope>NUCLEOTIDE SEQUENCE [LARGE SCALE GENOMIC DNA]</scope>
    <source>
        <strain>DSM 15242 / JCM 11007 / NBRC 100824 / MB4</strain>
    </source>
</reference>
<sequence length="467" mass="54774">MKKHIFEDIILQNALNFTEEVVEIFGDLLNKGMNITELVARIKELTDKLGRGAIEAIIEELDRIIKEDKRRKEKWVVERKDKKRLTTVLGDIEYERTYYKSKEDGRYTYLVDDALEIGRHDRIEKGVKIKLVENAIEESYERSSKKACPEELSKQTVLNAIREIGEVEVKREIKEKKEVRVLYIEADEDHVPLQDGRDETPRLVYIHEGREEKNGRNVLKNVYYKAYVGEKPEDIWIDVANYIEDNYKEEKIEKIYIAGDGAPWIKEGLKWILKSRFVLDRYHLNKYVLKATSKEPKYRDKIWRAINEGDKERVKKVFDELIKAAEEEREKEKIKEAKKYILNNWEGIKIYNEDEDVIGCSAEGHISHVFSARLSRNPLGWSREGLKLMAKLRVFSKNGGDLREVEWGKKKNINAGSYKLTKKQIKEAVRRVKTSTNEKINNITVLNIGKVTPIYRVLRALKYAQVI</sequence>
<comment type="similarity">
    <text evidence="1">Belongs to the UPF0236 family.</text>
</comment>
<organism>
    <name type="scientific">Caldanaerobacter subterraneus subsp. tengcongensis (strain DSM 15242 / JCM 11007 / NBRC 100824 / MB4)</name>
    <name type="common">Thermoanaerobacter tengcongensis</name>
    <dbReference type="NCBI Taxonomy" id="273068"/>
    <lineage>
        <taxon>Bacteria</taxon>
        <taxon>Bacillati</taxon>
        <taxon>Bacillota</taxon>
        <taxon>Clostridia</taxon>
        <taxon>Thermoanaerobacterales</taxon>
        <taxon>Thermoanaerobacteraceae</taxon>
        <taxon>Caldanaerobacter</taxon>
    </lineage>
</organism>
<evidence type="ECO:0000305" key="1"/>
<feature type="chain" id="PRO_0000220411" description="UPF0236 protein TTE0610/TTE0881/TTE1053/TTE2432">
    <location>
        <begin position="1"/>
        <end position="467"/>
    </location>
</feature>
<protein>
    <recommendedName>
        <fullName>UPF0236 protein TTE0610/TTE0881/TTE1053/TTE2432</fullName>
    </recommendedName>
</protein>